<protein>
    <recommendedName>
        <fullName evidence="1">NADH-quinone oxidoreductase subunit K 1</fullName>
        <ecNumber evidence="1">7.1.1.-</ecNumber>
    </recommendedName>
    <alternativeName>
        <fullName evidence="1">NADH dehydrogenase I subunit K 1</fullName>
    </alternativeName>
    <alternativeName>
        <fullName evidence="1">NDH-1 subunit K 1</fullName>
    </alternativeName>
</protein>
<comment type="function">
    <text evidence="1">NDH-1 shuttles electrons from NADH, via FMN and iron-sulfur (Fe-S) centers, to quinones in the respiratory chain. The immediate electron acceptor for the enzyme in this species is believed to be ubiquinone. Couples the redox reaction to proton translocation (for every two electrons transferred, four hydrogen ions are translocated across the cytoplasmic membrane), and thus conserves the redox energy in a proton gradient.</text>
</comment>
<comment type="catalytic activity">
    <reaction evidence="1">
        <text>a quinone + NADH + 5 H(+)(in) = a quinol + NAD(+) + 4 H(+)(out)</text>
        <dbReference type="Rhea" id="RHEA:57888"/>
        <dbReference type="ChEBI" id="CHEBI:15378"/>
        <dbReference type="ChEBI" id="CHEBI:24646"/>
        <dbReference type="ChEBI" id="CHEBI:57540"/>
        <dbReference type="ChEBI" id="CHEBI:57945"/>
        <dbReference type="ChEBI" id="CHEBI:132124"/>
    </reaction>
</comment>
<comment type="subunit">
    <text evidence="1">NDH-1 is composed of 14 different subunits. Subunits NuoA, H, J, K, L, M, N constitute the membrane sector of the complex.</text>
</comment>
<comment type="subcellular location">
    <subcellularLocation>
        <location evidence="1">Cell inner membrane</location>
        <topology evidence="1">Multi-pass membrane protein</topology>
    </subcellularLocation>
</comment>
<comment type="similarity">
    <text evidence="1">Belongs to the complex I subunit 4L family.</text>
</comment>
<organism>
    <name type="scientific">Aquifex aeolicus (strain VF5)</name>
    <dbReference type="NCBI Taxonomy" id="224324"/>
    <lineage>
        <taxon>Bacteria</taxon>
        <taxon>Pseudomonadati</taxon>
        <taxon>Aquificota</taxon>
        <taxon>Aquificia</taxon>
        <taxon>Aquificales</taxon>
        <taxon>Aquificaceae</taxon>
        <taxon>Aquifex</taxon>
    </lineage>
</organism>
<name>NUOK1_AQUAE</name>
<accession>O67339</accession>
<keyword id="KW-0997">Cell inner membrane</keyword>
<keyword id="KW-1003">Cell membrane</keyword>
<keyword id="KW-0472">Membrane</keyword>
<keyword id="KW-0520">NAD</keyword>
<keyword id="KW-0874">Quinone</keyword>
<keyword id="KW-1185">Reference proteome</keyword>
<keyword id="KW-1278">Translocase</keyword>
<keyword id="KW-0812">Transmembrane</keyword>
<keyword id="KW-1133">Transmembrane helix</keyword>
<keyword id="KW-0813">Transport</keyword>
<keyword id="KW-0830">Ubiquinone</keyword>
<evidence type="ECO:0000255" key="1">
    <source>
        <dbReference type="HAMAP-Rule" id="MF_01456"/>
    </source>
</evidence>
<dbReference type="EC" id="7.1.1.-" evidence="1"/>
<dbReference type="EMBL" id="AE000657">
    <property type="protein sequence ID" value="AAC07302.1"/>
    <property type="molecule type" value="Genomic_DNA"/>
</dbReference>
<dbReference type="PIR" id="H70413">
    <property type="entry name" value="H70413"/>
</dbReference>
<dbReference type="RefSeq" id="NP_213903.1">
    <property type="nucleotide sequence ID" value="NC_000918.1"/>
</dbReference>
<dbReference type="RefSeq" id="WP_010880841.1">
    <property type="nucleotide sequence ID" value="NC_000918.1"/>
</dbReference>
<dbReference type="SMR" id="O67339"/>
<dbReference type="FunCoup" id="O67339">
    <property type="interactions" value="224"/>
</dbReference>
<dbReference type="STRING" id="224324.aq_1319"/>
<dbReference type="EnsemblBacteria" id="AAC07302">
    <property type="protein sequence ID" value="AAC07302"/>
    <property type="gene ID" value="aq_1319"/>
</dbReference>
<dbReference type="KEGG" id="aae:aq_1319"/>
<dbReference type="PATRIC" id="fig|224324.8.peg.1027"/>
<dbReference type="eggNOG" id="COG0713">
    <property type="taxonomic scope" value="Bacteria"/>
</dbReference>
<dbReference type="HOGENOM" id="CLU_144724_0_0_0"/>
<dbReference type="InParanoid" id="O67339"/>
<dbReference type="OrthoDB" id="9810120at2"/>
<dbReference type="Proteomes" id="UP000000798">
    <property type="component" value="Chromosome"/>
</dbReference>
<dbReference type="GO" id="GO:0030964">
    <property type="term" value="C:NADH dehydrogenase complex"/>
    <property type="evidence" value="ECO:0000318"/>
    <property type="project" value="GO_Central"/>
</dbReference>
<dbReference type="GO" id="GO:0005886">
    <property type="term" value="C:plasma membrane"/>
    <property type="evidence" value="ECO:0007669"/>
    <property type="project" value="UniProtKB-SubCell"/>
</dbReference>
<dbReference type="GO" id="GO:0050136">
    <property type="term" value="F:NADH:ubiquinone reductase (non-electrogenic) activity"/>
    <property type="evidence" value="ECO:0007669"/>
    <property type="project" value="UniProtKB-UniRule"/>
</dbReference>
<dbReference type="GO" id="GO:0048038">
    <property type="term" value="F:quinone binding"/>
    <property type="evidence" value="ECO:0007669"/>
    <property type="project" value="UniProtKB-KW"/>
</dbReference>
<dbReference type="GO" id="GO:0042773">
    <property type="term" value="P:ATP synthesis coupled electron transport"/>
    <property type="evidence" value="ECO:0007669"/>
    <property type="project" value="InterPro"/>
</dbReference>
<dbReference type="FunFam" id="1.10.287.3510:FF:000001">
    <property type="entry name" value="NADH-quinone oxidoreductase subunit K"/>
    <property type="match status" value="1"/>
</dbReference>
<dbReference type="Gene3D" id="1.10.287.3510">
    <property type="match status" value="1"/>
</dbReference>
<dbReference type="HAMAP" id="MF_01456">
    <property type="entry name" value="NDH1_NuoK"/>
    <property type="match status" value="1"/>
</dbReference>
<dbReference type="InterPro" id="IPR001133">
    <property type="entry name" value="NADH_UbQ_OxRdtase_chain4L/K"/>
</dbReference>
<dbReference type="InterPro" id="IPR039428">
    <property type="entry name" value="NUOK/Mnh_C1-like"/>
</dbReference>
<dbReference type="NCBIfam" id="NF004320">
    <property type="entry name" value="PRK05715.1-2"/>
    <property type="match status" value="1"/>
</dbReference>
<dbReference type="PANTHER" id="PTHR11434:SF21">
    <property type="entry name" value="NADH DEHYDROGENASE SUBUNIT 4L-RELATED"/>
    <property type="match status" value="1"/>
</dbReference>
<dbReference type="PANTHER" id="PTHR11434">
    <property type="entry name" value="NADH-UBIQUINONE OXIDOREDUCTASE SUBUNIT ND4L"/>
    <property type="match status" value="1"/>
</dbReference>
<dbReference type="Pfam" id="PF00420">
    <property type="entry name" value="Oxidored_q2"/>
    <property type="match status" value="1"/>
</dbReference>
<proteinExistence type="inferred from homology"/>
<feature type="chain" id="PRO_0000389930" description="NADH-quinone oxidoreductase subunit K 1">
    <location>
        <begin position="1"/>
        <end position="100"/>
    </location>
</feature>
<feature type="transmembrane region" description="Helical" evidence="1">
    <location>
        <begin position="3"/>
        <end position="23"/>
    </location>
</feature>
<feature type="transmembrane region" description="Helical" evidence="1">
    <location>
        <begin position="28"/>
        <end position="48"/>
    </location>
</feature>
<feature type="transmembrane region" description="Helical" evidence="1">
    <location>
        <begin position="60"/>
        <end position="80"/>
    </location>
</feature>
<reference key="1">
    <citation type="journal article" date="1998" name="Nature">
        <title>The complete genome of the hyperthermophilic bacterium Aquifex aeolicus.</title>
        <authorList>
            <person name="Deckert G."/>
            <person name="Warren P.V."/>
            <person name="Gaasterland T."/>
            <person name="Young W.G."/>
            <person name="Lenox A.L."/>
            <person name="Graham D.E."/>
            <person name="Overbeek R."/>
            <person name="Snead M.A."/>
            <person name="Keller M."/>
            <person name="Aujay M."/>
            <person name="Huber R."/>
            <person name="Feldman R.A."/>
            <person name="Short J.M."/>
            <person name="Olsen G.J."/>
            <person name="Swanson R.V."/>
        </authorList>
    </citation>
    <scope>NUCLEOTIDE SEQUENCE [LARGE SCALE GENOMIC DNA]</scope>
    <source>
        <strain>VF5</strain>
    </source>
</reference>
<sequence>MDIIKAYIILSIALFLIGLLGVIVRKNLITVLVSTELMLNGINLALVAADKVLGRVDGQIFAFFVLTVAAAEVAVGLGLIVAIFRLKGYEASHEISQLRD</sequence>
<gene>
    <name evidence="1" type="primary">nuoK1</name>
    <name type="ordered locus">aq_1319</name>
</gene>